<dbReference type="EC" id="7.5.2.7" evidence="1"/>
<dbReference type="EMBL" id="CP000312">
    <property type="protein sequence ID" value="ABG85910.1"/>
    <property type="molecule type" value="Genomic_DNA"/>
</dbReference>
<dbReference type="RefSeq" id="WP_011592545.1">
    <property type="nucleotide sequence ID" value="NC_008262.1"/>
</dbReference>
<dbReference type="SMR" id="Q0SSJ0"/>
<dbReference type="KEGG" id="cpr:CPR_1601"/>
<dbReference type="Proteomes" id="UP000001824">
    <property type="component" value="Chromosome"/>
</dbReference>
<dbReference type="GO" id="GO:0005886">
    <property type="term" value="C:plasma membrane"/>
    <property type="evidence" value="ECO:0007669"/>
    <property type="project" value="UniProtKB-SubCell"/>
</dbReference>
<dbReference type="GO" id="GO:0015611">
    <property type="term" value="F:ABC-type D-ribose transporter activity"/>
    <property type="evidence" value="ECO:0007669"/>
    <property type="project" value="UniProtKB-EC"/>
</dbReference>
<dbReference type="GO" id="GO:0005524">
    <property type="term" value="F:ATP binding"/>
    <property type="evidence" value="ECO:0007669"/>
    <property type="project" value="UniProtKB-KW"/>
</dbReference>
<dbReference type="GO" id="GO:0016887">
    <property type="term" value="F:ATP hydrolysis activity"/>
    <property type="evidence" value="ECO:0007669"/>
    <property type="project" value="InterPro"/>
</dbReference>
<dbReference type="CDD" id="cd03216">
    <property type="entry name" value="ABC_Carb_Monos_I"/>
    <property type="match status" value="1"/>
</dbReference>
<dbReference type="CDD" id="cd03215">
    <property type="entry name" value="ABC_Carb_Monos_II"/>
    <property type="match status" value="1"/>
</dbReference>
<dbReference type="FunFam" id="3.40.50.300:FF:000126">
    <property type="entry name" value="Galactose/methyl galactoside import ATP-binding protein MglA"/>
    <property type="match status" value="1"/>
</dbReference>
<dbReference type="FunFam" id="3.40.50.300:FF:000127">
    <property type="entry name" value="Ribose import ATP-binding protein RbsA"/>
    <property type="match status" value="1"/>
</dbReference>
<dbReference type="Gene3D" id="3.40.50.300">
    <property type="entry name" value="P-loop containing nucleotide triphosphate hydrolases"/>
    <property type="match status" value="2"/>
</dbReference>
<dbReference type="InterPro" id="IPR003593">
    <property type="entry name" value="AAA+_ATPase"/>
</dbReference>
<dbReference type="InterPro" id="IPR050107">
    <property type="entry name" value="ABC_carbohydrate_import_ATPase"/>
</dbReference>
<dbReference type="InterPro" id="IPR003439">
    <property type="entry name" value="ABC_transporter-like_ATP-bd"/>
</dbReference>
<dbReference type="InterPro" id="IPR017871">
    <property type="entry name" value="ABC_transporter-like_CS"/>
</dbReference>
<dbReference type="InterPro" id="IPR027417">
    <property type="entry name" value="P-loop_NTPase"/>
</dbReference>
<dbReference type="PANTHER" id="PTHR43790">
    <property type="entry name" value="CARBOHYDRATE TRANSPORT ATP-BINDING PROTEIN MG119-RELATED"/>
    <property type="match status" value="1"/>
</dbReference>
<dbReference type="PANTHER" id="PTHR43790:SF3">
    <property type="entry name" value="D-ALLOSE IMPORT ATP-BINDING PROTEIN ALSA-RELATED"/>
    <property type="match status" value="1"/>
</dbReference>
<dbReference type="Pfam" id="PF00005">
    <property type="entry name" value="ABC_tran"/>
    <property type="match status" value="2"/>
</dbReference>
<dbReference type="SMART" id="SM00382">
    <property type="entry name" value="AAA"/>
    <property type="match status" value="2"/>
</dbReference>
<dbReference type="SUPFAM" id="SSF52540">
    <property type="entry name" value="P-loop containing nucleoside triphosphate hydrolases"/>
    <property type="match status" value="2"/>
</dbReference>
<dbReference type="PROSITE" id="PS00211">
    <property type="entry name" value="ABC_TRANSPORTER_1"/>
    <property type="match status" value="1"/>
</dbReference>
<dbReference type="PROSITE" id="PS50893">
    <property type="entry name" value="ABC_TRANSPORTER_2"/>
    <property type="match status" value="2"/>
</dbReference>
<dbReference type="PROSITE" id="PS51254">
    <property type="entry name" value="RBSA"/>
    <property type="match status" value="1"/>
</dbReference>
<comment type="function">
    <text evidence="1">Part of the ABC transporter complex RbsABC involved in ribose import. Responsible for energy coupling to the transport system.</text>
</comment>
<comment type="catalytic activity">
    <reaction evidence="1">
        <text>D-ribose(out) + ATP + H2O = D-ribose(in) + ADP + phosphate + H(+)</text>
        <dbReference type="Rhea" id="RHEA:29903"/>
        <dbReference type="ChEBI" id="CHEBI:15377"/>
        <dbReference type="ChEBI" id="CHEBI:15378"/>
        <dbReference type="ChEBI" id="CHEBI:30616"/>
        <dbReference type="ChEBI" id="CHEBI:43474"/>
        <dbReference type="ChEBI" id="CHEBI:47013"/>
        <dbReference type="ChEBI" id="CHEBI:456216"/>
        <dbReference type="EC" id="7.5.2.7"/>
    </reaction>
</comment>
<comment type="subunit">
    <text evidence="1">The complex is composed of an ATP-binding protein (RbsA), two transmembrane proteins (RbsC) and a solute-binding protein (RbsB).</text>
</comment>
<comment type="subcellular location">
    <subcellularLocation>
        <location evidence="1">Cell membrane</location>
        <topology evidence="1">Peripheral membrane protein</topology>
    </subcellularLocation>
</comment>
<comment type="similarity">
    <text evidence="1">Belongs to the ABC transporter superfamily. Ribose importer (TC 3.A.1.2.1) family.</text>
</comment>
<protein>
    <recommendedName>
        <fullName evidence="1">Ribose import ATP-binding protein RbsA</fullName>
        <ecNumber evidence="1">7.5.2.7</ecNumber>
    </recommendedName>
</protein>
<proteinExistence type="inferred from homology"/>
<feature type="chain" id="PRO_0000261058" description="Ribose import ATP-binding protein RbsA">
    <location>
        <begin position="1"/>
        <end position="501"/>
    </location>
</feature>
<feature type="domain" description="ABC transporter 1" evidence="1">
    <location>
        <begin position="8"/>
        <end position="245"/>
    </location>
</feature>
<feature type="domain" description="ABC transporter 2" evidence="1">
    <location>
        <begin position="255"/>
        <end position="500"/>
    </location>
</feature>
<feature type="binding site" evidence="1">
    <location>
        <begin position="40"/>
        <end position="47"/>
    </location>
    <ligand>
        <name>ATP</name>
        <dbReference type="ChEBI" id="CHEBI:30616"/>
    </ligand>
</feature>
<gene>
    <name evidence="1" type="primary">rbsA</name>
    <name type="ordered locus">CPR_1601</name>
</gene>
<name>RBSA_CLOPS</name>
<organism>
    <name type="scientific">Clostridium perfringens (strain SM101 / Type A)</name>
    <dbReference type="NCBI Taxonomy" id="289380"/>
    <lineage>
        <taxon>Bacteria</taxon>
        <taxon>Bacillati</taxon>
        <taxon>Bacillota</taxon>
        <taxon>Clostridia</taxon>
        <taxon>Eubacteriales</taxon>
        <taxon>Clostridiaceae</taxon>
        <taxon>Clostridium</taxon>
    </lineage>
</organism>
<reference key="1">
    <citation type="journal article" date="2006" name="Genome Res.">
        <title>Skewed genomic variability in strains of the toxigenic bacterial pathogen, Clostridium perfringens.</title>
        <authorList>
            <person name="Myers G.S.A."/>
            <person name="Rasko D.A."/>
            <person name="Cheung J.K."/>
            <person name="Ravel J."/>
            <person name="Seshadri R."/>
            <person name="DeBoy R.T."/>
            <person name="Ren Q."/>
            <person name="Varga J."/>
            <person name="Awad M.M."/>
            <person name="Brinkac L.M."/>
            <person name="Daugherty S.C."/>
            <person name="Haft D.H."/>
            <person name="Dodson R.J."/>
            <person name="Madupu R."/>
            <person name="Nelson W.C."/>
            <person name="Rosovitz M.J."/>
            <person name="Sullivan S.A."/>
            <person name="Khouri H."/>
            <person name="Dimitrov G.I."/>
            <person name="Watkins K.L."/>
            <person name="Mulligan S."/>
            <person name="Benton J."/>
            <person name="Radune D."/>
            <person name="Fisher D.J."/>
            <person name="Atkins H.S."/>
            <person name="Hiscox T."/>
            <person name="Jost B.H."/>
            <person name="Billington S.J."/>
            <person name="Songer J.G."/>
            <person name="McClane B.A."/>
            <person name="Titball R.W."/>
            <person name="Rood J.I."/>
            <person name="Melville S.B."/>
            <person name="Paulsen I.T."/>
        </authorList>
    </citation>
    <scope>NUCLEOTIDE SEQUENCE [LARGE SCALE GENOMIC DNA]</scope>
    <source>
        <strain>SM101 / Type A</strain>
    </source>
</reference>
<sequence length="501" mass="55560">MGERTPMLKMVGVSKSFPGVKALDNVSLMAYGGEVTALMGENGAGKSTLMKILSGVYKKDEGKIFIEGREVEVKGIKSAEEAGITIIHQELSVLNNLTVSENIFLGNEKHSKFTGRINKKLLDERSKMFLEQIGCDIDPNRLVSTLNVGEKQMIEIAKALTKNARIIIMDEPTTALTDVETENLFKVIENLRKKGIAIIYISHRMEEIFKICHRVEVLRDGKYTGSAEIKDIDNDKLIAMMVGRTIEDQFPYRDVKKGDLALEVKNLSCKEGVKGASFTLRKGEILGIAGLMGSGRTELAKTIFGEYKKTSGEISLNGSLININCISDAINNGICYLSEDRKKEGCILGMSVGENMTLCNLKKYENKFKSLDKKEEAKDIEYYIKKINIKTPNKEQFIKNLSGGNQQKVILAKWLMLSPEVLIIDEPTRGIDVGAKKEIYELLNELKASGKAIIMISSDLPEVLGISDRIMVMSEGRISGELNRDEANQESIMKLAVGINN</sequence>
<accession>Q0SSJ0</accession>
<evidence type="ECO:0000255" key="1">
    <source>
        <dbReference type="HAMAP-Rule" id="MF_01716"/>
    </source>
</evidence>
<keyword id="KW-0067">ATP-binding</keyword>
<keyword id="KW-1003">Cell membrane</keyword>
<keyword id="KW-0472">Membrane</keyword>
<keyword id="KW-0547">Nucleotide-binding</keyword>
<keyword id="KW-0677">Repeat</keyword>
<keyword id="KW-0762">Sugar transport</keyword>
<keyword id="KW-1278">Translocase</keyword>
<keyword id="KW-0813">Transport</keyword>